<sequence>MSMKCFQCQETVKNQGCTVKGVCGKPDNVANLQDVLIYTLKGISFYAHEGRNLGVKDEEVDRFVMDNLFATVTNVNFSEQDFIDRIKQSFKIRDQIKEQVMLKYREKYGENLDNKVPSNATWYTEDELNFKTKGEEVGVHSSDNEDINSLRELLTYGIKGIAAYAHHAYTLNQKDDEIFAFMHKGLAATTDDSLSVDDLVSLVMECGKFGVNTMALLDKANTEAYGHPEPTQINIGVRNNPGILISGHDLKDMQELLEQTEGTGVDVYTHGEMLPANAYPAFKKYDHFVGNYGNAWWQQNEEFEKFNGPILMTTNCLVPPKDSYKDRVYTTGVVGFDGVTHIPEREAGESKDFSQIIEHAKKCAAPEELEQGEIPGGFAHNAVLSVADKVVEAVKNGDIKRFVVMGGCDGRHKSREYYTEFAKALPQDTIILTAGCAKYRYNKLDLGDIGGIPRVLDAGQCNDSYSLVVIAQKLAEAFELEDINDLPVSYNIAWYEQKAVTVLLSLLYLGVKKIYLGPTLPAFVSENVLNVLVDKFDMRPNSNVDEDLEKIMAGE</sequence>
<protein>
    <recommendedName>
        <fullName evidence="1">Hydroxylamine reductase</fullName>
        <ecNumber evidence="1">1.7.99.1</ecNumber>
    </recommendedName>
    <alternativeName>
        <fullName evidence="1">Hybrid-cluster protein</fullName>
        <shortName evidence="1">HCP</shortName>
    </alternativeName>
    <alternativeName>
        <fullName evidence="1">Prismane protein</fullName>
    </alternativeName>
</protein>
<keyword id="KW-0004">4Fe-4S</keyword>
<keyword id="KW-0963">Cytoplasm</keyword>
<keyword id="KW-0408">Iron</keyword>
<keyword id="KW-0411">Iron-sulfur</keyword>
<keyword id="KW-0479">Metal-binding</keyword>
<keyword id="KW-0560">Oxidoreductase</keyword>
<keyword id="KW-1185">Reference proteome</keyword>
<name>HCP_NATTJ</name>
<organism>
    <name type="scientific">Natranaerobius thermophilus (strain ATCC BAA-1301 / DSM 18059 / JW/NM-WN-LF)</name>
    <dbReference type="NCBI Taxonomy" id="457570"/>
    <lineage>
        <taxon>Bacteria</taxon>
        <taxon>Bacillati</taxon>
        <taxon>Bacillota</taxon>
        <taxon>Clostridia</taxon>
        <taxon>Natranaerobiales</taxon>
        <taxon>Natranaerobiaceae</taxon>
        <taxon>Natranaerobius</taxon>
    </lineage>
</organism>
<dbReference type="EC" id="1.7.99.1" evidence="1"/>
<dbReference type="EMBL" id="CP001034">
    <property type="protein sequence ID" value="ACB84561.1"/>
    <property type="molecule type" value="Genomic_DNA"/>
</dbReference>
<dbReference type="RefSeq" id="WP_012447438.1">
    <property type="nucleotide sequence ID" value="NZ_CP144221.1"/>
</dbReference>
<dbReference type="SMR" id="B2A0K0"/>
<dbReference type="STRING" id="457570.Nther_0977"/>
<dbReference type="KEGG" id="nth:Nther_0977"/>
<dbReference type="eggNOG" id="COG1151">
    <property type="taxonomic scope" value="Bacteria"/>
</dbReference>
<dbReference type="HOGENOM" id="CLU_038344_2_0_9"/>
<dbReference type="InParanoid" id="B2A0K0"/>
<dbReference type="OrthoDB" id="9761526at2"/>
<dbReference type="Proteomes" id="UP000001683">
    <property type="component" value="Chromosome"/>
</dbReference>
<dbReference type="GO" id="GO:0005737">
    <property type="term" value="C:cytoplasm"/>
    <property type="evidence" value="ECO:0007669"/>
    <property type="project" value="UniProtKB-SubCell"/>
</dbReference>
<dbReference type="GO" id="GO:0051539">
    <property type="term" value="F:4 iron, 4 sulfur cluster binding"/>
    <property type="evidence" value="ECO:0007669"/>
    <property type="project" value="UniProtKB-KW"/>
</dbReference>
<dbReference type="GO" id="GO:0050418">
    <property type="term" value="F:hydroxylamine reductase activity"/>
    <property type="evidence" value="ECO:0007669"/>
    <property type="project" value="UniProtKB-UniRule"/>
</dbReference>
<dbReference type="GO" id="GO:0046872">
    <property type="term" value="F:metal ion binding"/>
    <property type="evidence" value="ECO:0007669"/>
    <property type="project" value="UniProtKB-KW"/>
</dbReference>
<dbReference type="GO" id="GO:0004601">
    <property type="term" value="F:peroxidase activity"/>
    <property type="evidence" value="ECO:0007669"/>
    <property type="project" value="TreeGrafter"/>
</dbReference>
<dbReference type="GO" id="GO:0042542">
    <property type="term" value="P:response to hydrogen peroxide"/>
    <property type="evidence" value="ECO:0007669"/>
    <property type="project" value="TreeGrafter"/>
</dbReference>
<dbReference type="CDD" id="cd01914">
    <property type="entry name" value="HCP"/>
    <property type="match status" value="1"/>
</dbReference>
<dbReference type="FunFam" id="1.20.1270.20:FF:000001">
    <property type="entry name" value="Hydroxylamine reductase"/>
    <property type="match status" value="1"/>
</dbReference>
<dbReference type="FunFam" id="3.40.50.2030:FF:000001">
    <property type="entry name" value="Hydroxylamine reductase"/>
    <property type="match status" value="1"/>
</dbReference>
<dbReference type="FunFam" id="3.40.50.2030:FF:000002">
    <property type="entry name" value="Hydroxylamine reductase"/>
    <property type="match status" value="1"/>
</dbReference>
<dbReference type="Gene3D" id="1.20.1270.20">
    <property type="match status" value="2"/>
</dbReference>
<dbReference type="Gene3D" id="3.40.50.2030">
    <property type="match status" value="2"/>
</dbReference>
<dbReference type="HAMAP" id="MF_00069">
    <property type="entry name" value="Hydroxylam_reduct"/>
    <property type="match status" value="1"/>
</dbReference>
<dbReference type="InterPro" id="IPR004137">
    <property type="entry name" value="HCP/CODH"/>
</dbReference>
<dbReference type="InterPro" id="IPR010048">
    <property type="entry name" value="Hydroxylam_reduct"/>
</dbReference>
<dbReference type="InterPro" id="IPR016099">
    <property type="entry name" value="Prismane-like_a/b-sand"/>
</dbReference>
<dbReference type="InterPro" id="IPR011254">
    <property type="entry name" value="Prismane-like_sf"/>
</dbReference>
<dbReference type="InterPro" id="IPR016100">
    <property type="entry name" value="Prismane_a-bundle"/>
</dbReference>
<dbReference type="NCBIfam" id="TIGR01703">
    <property type="entry name" value="hybrid_clust"/>
    <property type="match status" value="1"/>
</dbReference>
<dbReference type="NCBIfam" id="NF003658">
    <property type="entry name" value="PRK05290.1"/>
    <property type="match status" value="1"/>
</dbReference>
<dbReference type="PANTHER" id="PTHR30109">
    <property type="entry name" value="HYDROXYLAMINE REDUCTASE"/>
    <property type="match status" value="1"/>
</dbReference>
<dbReference type="PANTHER" id="PTHR30109:SF0">
    <property type="entry name" value="HYDROXYLAMINE REDUCTASE"/>
    <property type="match status" value="1"/>
</dbReference>
<dbReference type="Pfam" id="PF03063">
    <property type="entry name" value="Prismane"/>
    <property type="match status" value="1"/>
</dbReference>
<dbReference type="PIRSF" id="PIRSF000076">
    <property type="entry name" value="HCP"/>
    <property type="match status" value="1"/>
</dbReference>
<dbReference type="SUPFAM" id="SSF56821">
    <property type="entry name" value="Prismane protein-like"/>
    <property type="match status" value="1"/>
</dbReference>
<reference key="1">
    <citation type="submission" date="2008-04" db="EMBL/GenBank/DDBJ databases">
        <title>Complete sequence of chromosome of Natranaerobius thermophilus JW/NM-WN-LF.</title>
        <authorList>
            <consortium name="US DOE Joint Genome Institute"/>
            <person name="Copeland A."/>
            <person name="Lucas S."/>
            <person name="Lapidus A."/>
            <person name="Glavina del Rio T."/>
            <person name="Dalin E."/>
            <person name="Tice H."/>
            <person name="Bruce D."/>
            <person name="Goodwin L."/>
            <person name="Pitluck S."/>
            <person name="Chertkov O."/>
            <person name="Brettin T."/>
            <person name="Detter J.C."/>
            <person name="Han C."/>
            <person name="Kuske C.R."/>
            <person name="Schmutz J."/>
            <person name="Larimer F."/>
            <person name="Land M."/>
            <person name="Hauser L."/>
            <person name="Kyrpides N."/>
            <person name="Lykidis A."/>
            <person name="Mesbah N.M."/>
            <person name="Wiegel J."/>
        </authorList>
    </citation>
    <scope>NUCLEOTIDE SEQUENCE [LARGE SCALE GENOMIC DNA]</scope>
    <source>
        <strain>ATCC BAA-1301 / DSM 18059 / JW/NM-WN-LF</strain>
    </source>
</reference>
<comment type="function">
    <text evidence="1">Catalyzes the reduction of hydroxylamine to form NH(3) and H(2)O.</text>
</comment>
<comment type="catalytic activity">
    <reaction evidence="1">
        <text>A + NH4(+) + H2O = hydroxylamine + AH2 + H(+)</text>
        <dbReference type="Rhea" id="RHEA:22052"/>
        <dbReference type="ChEBI" id="CHEBI:13193"/>
        <dbReference type="ChEBI" id="CHEBI:15377"/>
        <dbReference type="ChEBI" id="CHEBI:15378"/>
        <dbReference type="ChEBI" id="CHEBI:15429"/>
        <dbReference type="ChEBI" id="CHEBI:17499"/>
        <dbReference type="ChEBI" id="CHEBI:28938"/>
        <dbReference type="EC" id="1.7.99.1"/>
    </reaction>
</comment>
<comment type="cofactor">
    <cofactor evidence="1">
        <name>[4Fe-4S] cluster</name>
        <dbReference type="ChEBI" id="CHEBI:49883"/>
    </cofactor>
    <text evidence="1">Binds 1 [4Fe-4S] cluster.</text>
</comment>
<comment type="cofactor">
    <cofactor evidence="1">
        <name>hybrid [4Fe-2O-2S] cluster</name>
        <dbReference type="ChEBI" id="CHEBI:60519"/>
    </cofactor>
    <text evidence="1">Binds 1 hybrid [4Fe-2O-2S] cluster.</text>
</comment>
<comment type="subcellular location">
    <subcellularLocation>
        <location evidence="1">Cytoplasm</location>
    </subcellularLocation>
</comment>
<comment type="similarity">
    <text evidence="1">Belongs to the HCP family.</text>
</comment>
<proteinExistence type="inferred from homology"/>
<feature type="chain" id="PRO_1000092341" description="Hydroxylamine reductase">
    <location>
        <begin position="1"/>
        <end position="555"/>
    </location>
</feature>
<feature type="binding site" evidence="1">
    <location>
        <position position="5"/>
    </location>
    <ligand>
        <name>[4Fe-4S] cluster</name>
        <dbReference type="ChEBI" id="CHEBI:49883"/>
    </ligand>
</feature>
<feature type="binding site" evidence="1">
    <location>
        <position position="8"/>
    </location>
    <ligand>
        <name>[4Fe-4S] cluster</name>
        <dbReference type="ChEBI" id="CHEBI:49883"/>
    </ligand>
</feature>
<feature type="binding site" evidence="1">
    <location>
        <position position="17"/>
    </location>
    <ligand>
        <name>[4Fe-4S] cluster</name>
        <dbReference type="ChEBI" id="CHEBI:49883"/>
    </ligand>
</feature>
<feature type="binding site" evidence="1">
    <location>
        <position position="23"/>
    </location>
    <ligand>
        <name>[4Fe-4S] cluster</name>
        <dbReference type="ChEBI" id="CHEBI:49883"/>
    </ligand>
</feature>
<feature type="binding site" evidence="1">
    <location>
        <position position="248"/>
    </location>
    <ligand>
        <name>hybrid [4Fe-2O-2S] cluster</name>
        <dbReference type="ChEBI" id="CHEBI:60519"/>
    </ligand>
</feature>
<feature type="binding site" evidence="1">
    <location>
        <position position="272"/>
    </location>
    <ligand>
        <name>hybrid [4Fe-2O-2S] cluster</name>
        <dbReference type="ChEBI" id="CHEBI:60519"/>
    </ligand>
</feature>
<feature type="binding site" evidence="1">
    <location>
        <position position="316"/>
    </location>
    <ligand>
        <name>hybrid [4Fe-2O-2S] cluster</name>
        <dbReference type="ChEBI" id="CHEBI:60519"/>
    </ligand>
</feature>
<feature type="binding site" description="via persulfide group" evidence="1">
    <location>
        <position position="408"/>
    </location>
    <ligand>
        <name>hybrid [4Fe-2O-2S] cluster</name>
        <dbReference type="ChEBI" id="CHEBI:60519"/>
    </ligand>
</feature>
<feature type="binding site" evidence="1">
    <location>
        <position position="436"/>
    </location>
    <ligand>
        <name>hybrid [4Fe-2O-2S] cluster</name>
        <dbReference type="ChEBI" id="CHEBI:60519"/>
    </ligand>
</feature>
<feature type="binding site" evidence="1">
    <location>
        <position position="461"/>
    </location>
    <ligand>
        <name>hybrid [4Fe-2O-2S] cluster</name>
        <dbReference type="ChEBI" id="CHEBI:60519"/>
    </ligand>
</feature>
<feature type="binding site" evidence="1">
    <location>
        <position position="496"/>
    </location>
    <ligand>
        <name>hybrid [4Fe-2O-2S] cluster</name>
        <dbReference type="ChEBI" id="CHEBI:60519"/>
    </ligand>
</feature>
<feature type="binding site" evidence="1">
    <location>
        <position position="498"/>
    </location>
    <ligand>
        <name>hybrid [4Fe-2O-2S] cluster</name>
        <dbReference type="ChEBI" id="CHEBI:60519"/>
    </ligand>
</feature>
<feature type="modified residue" description="Cysteine persulfide" evidence="1">
    <location>
        <position position="408"/>
    </location>
</feature>
<accession>B2A0K0</accession>
<gene>
    <name evidence="1" type="primary">hcp</name>
    <name type="ordered locus">Nther_0977</name>
</gene>
<evidence type="ECO:0000255" key="1">
    <source>
        <dbReference type="HAMAP-Rule" id="MF_00069"/>
    </source>
</evidence>